<dbReference type="EMBL" id="AE017245">
    <property type="protein sequence ID" value="AAZ43958.1"/>
    <property type="molecule type" value="Genomic_DNA"/>
</dbReference>
<dbReference type="RefSeq" id="WP_011283687.1">
    <property type="nucleotide sequence ID" value="NC_007294.1"/>
</dbReference>
<dbReference type="SMR" id="Q4A5L3"/>
<dbReference type="STRING" id="262723.MS53_0550"/>
<dbReference type="KEGG" id="msy:MS53_0550"/>
<dbReference type="eggNOG" id="COG0211">
    <property type="taxonomic scope" value="Bacteria"/>
</dbReference>
<dbReference type="HOGENOM" id="CLU_095424_4_0_14"/>
<dbReference type="OrthoDB" id="9803474at2"/>
<dbReference type="Proteomes" id="UP000000549">
    <property type="component" value="Chromosome"/>
</dbReference>
<dbReference type="GO" id="GO:0022625">
    <property type="term" value="C:cytosolic large ribosomal subunit"/>
    <property type="evidence" value="ECO:0007669"/>
    <property type="project" value="TreeGrafter"/>
</dbReference>
<dbReference type="GO" id="GO:0003735">
    <property type="term" value="F:structural constituent of ribosome"/>
    <property type="evidence" value="ECO:0007669"/>
    <property type="project" value="InterPro"/>
</dbReference>
<dbReference type="GO" id="GO:0006412">
    <property type="term" value="P:translation"/>
    <property type="evidence" value="ECO:0007669"/>
    <property type="project" value="UniProtKB-UniRule"/>
</dbReference>
<dbReference type="FunFam" id="2.40.50.100:FF:000004">
    <property type="entry name" value="50S ribosomal protein L27"/>
    <property type="match status" value="1"/>
</dbReference>
<dbReference type="Gene3D" id="2.40.50.100">
    <property type="match status" value="1"/>
</dbReference>
<dbReference type="HAMAP" id="MF_00539">
    <property type="entry name" value="Ribosomal_bL27"/>
    <property type="match status" value="1"/>
</dbReference>
<dbReference type="InterPro" id="IPR001684">
    <property type="entry name" value="Ribosomal_bL27"/>
</dbReference>
<dbReference type="InterPro" id="IPR018261">
    <property type="entry name" value="Ribosomal_bL27_CS"/>
</dbReference>
<dbReference type="NCBIfam" id="TIGR00062">
    <property type="entry name" value="L27"/>
    <property type="match status" value="1"/>
</dbReference>
<dbReference type="PANTHER" id="PTHR15893:SF0">
    <property type="entry name" value="LARGE RIBOSOMAL SUBUNIT PROTEIN BL27M"/>
    <property type="match status" value="1"/>
</dbReference>
<dbReference type="PANTHER" id="PTHR15893">
    <property type="entry name" value="RIBOSOMAL PROTEIN L27"/>
    <property type="match status" value="1"/>
</dbReference>
<dbReference type="Pfam" id="PF01016">
    <property type="entry name" value="Ribosomal_L27"/>
    <property type="match status" value="1"/>
</dbReference>
<dbReference type="PRINTS" id="PR00063">
    <property type="entry name" value="RIBOSOMALL27"/>
</dbReference>
<dbReference type="SUPFAM" id="SSF110324">
    <property type="entry name" value="Ribosomal L27 protein-like"/>
    <property type="match status" value="1"/>
</dbReference>
<dbReference type="PROSITE" id="PS00831">
    <property type="entry name" value="RIBOSOMAL_L27"/>
    <property type="match status" value="1"/>
</dbReference>
<protein>
    <recommendedName>
        <fullName evidence="1">Large ribosomal subunit protein bL27</fullName>
    </recommendedName>
    <alternativeName>
        <fullName evidence="3">50S ribosomal protein L27</fullName>
    </alternativeName>
</protein>
<accession>Q4A5L3</accession>
<organism>
    <name type="scientific">Mycoplasmopsis synoviae (strain 53)</name>
    <name type="common">Mycoplasma synoviae</name>
    <dbReference type="NCBI Taxonomy" id="262723"/>
    <lineage>
        <taxon>Bacteria</taxon>
        <taxon>Bacillati</taxon>
        <taxon>Mycoplasmatota</taxon>
        <taxon>Mycoplasmoidales</taxon>
        <taxon>Metamycoplasmataceae</taxon>
        <taxon>Mycoplasmopsis</taxon>
    </lineage>
</organism>
<name>RL27_MYCS5</name>
<gene>
    <name evidence="1" type="primary">rpmA</name>
    <name type="ordered locus">MS53_0550</name>
</gene>
<keyword id="KW-1185">Reference proteome</keyword>
<keyword id="KW-0687">Ribonucleoprotein</keyword>
<keyword id="KW-0689">Ribosomal protein</keyword>
<sequence length="84" mass="9290">MATTKAGGSTKNGRDSHSKRLGAKLYDGQFAKAGAIIYRQRGTRVFPGVNVQRSGDDTLFSLADGYVKYENKRNRKYVSVYPAK</sequence>
<reference key="1">
    <citation type="journal article" date="2005" name="J. Bacteriol.">
        <title>Swine and poultry pathogens: the complete genome sequences of two strains of Mycoplasma hyopneumoniae and a strain of Mycoplasma synoviae.</title>
        <authorList>
            <person name="Vasconcelos A.T.R."/>
            <person name="Ferreira H.B."/>
            <person name="Bizarro C.V."/>
            <person name="Bonatto S.L."/>
            <person name="Carvalho M.O."/>
            <person name="Pinto P.M."/>
            <person name="Almeida D.F."/>
            <person name="Almeida L.G.P."/>
            <person name="Almeida R."/>
            <person name="Alves-Junior L."/>
            <person name="Assuncao E.N."/>
            <person name="Azevedo V.A.C."/>
            <person name="Bogo M.R."/>
            <person name="Brigido M.M."/>
            <person name="Brocchi M."/>
            <person name="Burity H.A."/>
            <person name="Camargo A.A."/>
            <person name="Camargo S.S."/>
            <person name="Carepo M.S."/>
            <person name="Carraro D.M."/>
            <person name="de Mattos Cascardo J.C."/>
            <person name="Castro L.A."/>
            <person name="Cavalcanti G."/>
            <person name="Chemale G."/>
            <person name="Collevatti R.G."/>
            <person name="Cunha C.W."/>
            <person name="Dallagiovanna B."/>
            <person name="Dambros B.P."/>
            <person name="Dellagostin O.A."/>
            <person name="Falcao C."/>
            <person name="Fantinatti-Garboggini F."/>
            <person name="Felipe M.S.S."/>
            <person name="Fiorentin L."/>
            <person name="Franco G.R."/>
            <person name="Freitas N.S.A."/>
            <person name="Frias D."/>
            <person name="Grangeiro T.B."/>
            <person name="Grisard E.C."/>
            <person name="Guimaraes C.T."/>
            <person name="Hungria M."/>
            <person name="Jardim S.N."/>
            <person name="Krieger M.A."/>
            <person name="Laurino J.P."/>
            <person name="Lima L.F.A."/>
            <person name="Lopes M.I."/>
            <person name="Loreto E.L.S."/>
            <person name="Madeira H.M.F."/>
            <person name="Manfio G.P."/>
            <person name="Maranhao A.Q."/>
            <person name="Martinkovics C.T."/>
            <person name="Medeiros S.R.B."/>
            <person name="Moreira M.A.M."/>
            <person name="Neiva M."/>
            <person name="Ramalho-Neto C.E."/>
            <person name="Nicolas M.F."/>
            <person name="Oliveira S.C."/>
            <person name="Paixao R.F.C."/>
            <person name="Pedrosa F.O."/>
            <person name="Pena S.D.J."/>
            <person name="Pereira M."/>
            <person name="Pereira-Ferrari L."/>
            <person name="Piffer I."/>
            <person name="Pinto L.S."/>
            <person name="Potrich D.P."/>
            <person name="Salim A.C.M."/>
            <person name="Santos F.R."/>
            <person name="Schmitt R."/>
            <person name="Schneider M.P.C."/>
            <person name="Schrank A."/>
            <person name="Schrank I.S."/>
            <person name="Schuck A.F."/>
            <person name="Seuanez H.N."/>
            <person name="Silva D.W."/>
            <person name="Silva R."/>
            <person name="Silva S.C."/>
            <person name="Soares C.M.A."/>
            <person name="Souza K.R.L."/>
            <person name="Souza R.C."/>
            <person name="Staats C.C."/>
            <person name="Steffens M.B.R."/>
            <person name="Teixeira S.M.R."/>
            <person name="Urmenyi T.P."/>
            <person name="Vainstein M.H."/>
            <person name="Zuccherato L.W."/>
            <person name="Simpson A.J.G."/>
            <person name="Zaha A."/>
        </authorList>
    </citation>
    <scope>NUCLEOTIDE SEQUENCE [LARGE SCALE GENOMIC DNA]</scope>
    <source>
        <strain>53</strain>
    </source>
</reference>
<comment type="similarity">
    <text evidence="1">Belongs to the bacterial ribosomal protein bL27 family.</text>
</comment>
<evidence type="ECO:0000255" key="1">
    <source>
        <dbReference type="HAMAP-Rule" id="MF_00539"/>
    </source>
</evidence>
<evidence type="ECO:0000256" key="2">
    <source>
        <dbReference type="SAM" id="MobiDB-lite"/>
    </source>
</evidence>
<evidence type="ECO:0000305" key="3"/>
<feature type="chain" id="PRO_1000081898" description="Large ribosomal subunit protein bL27">
    <location>
        <begin position="1"/>
        <end position="84"/>
    </location>
</feature>
<feature type="region of interest" description="Disordered" evidence="2">
    <location>
        <begin position="1"/>
        <end position="20"/>
    </location>
</feature>
<feature type="compositionally biased region" description="Polar residues" evidence="2">
    <location>
        <begin position="1"/>
        <end position="11"/>
    </location>
</feature>
<proteinExistence type="inferred from homology"/>